<name>RL18_STRPG</name>
<protein>
    <recommendedName>
        <fullName evidence="1">Large ribosomal subunit protein uL18</fullName>
    </recommendedName>
    <alternativeName>
        <fullName evidence="3">50S ribosomal protein L18</fullName>
    </alternativeName>
</protein>
<proteinExistence type="inferred from homology"/>
<sequence>MISKPDKNKIRQKRHRRVRGKLSGTADRPRLNVFRSNTGIYAQVIDDVAGVTLASASTLDKDVSKGTKTEQAVVVGKLVAERAVAKGISEVVFDRGGYLYHGRVKALADAARENGLKF</sequence>
<dbReference type="EMBL" id="AM295007">
    <property type="protein sequence ID" value="CAM29402.1"/>
    <property type="molecule type" value="Genomic_DNA"/>
</dbReference>
<dbReference type="RefSeq" id="WP_002987751.1">
    <property type="nucleotide sequence ID" value="NC_009332.1"/>
</dbReference>
<dbReference type="SMR" id="A2RC30"/>
<dbReference type="GeneID" id="69900042"/>
<dbReference type="KEGG" id="spf:SpyM50060"/>
<dbReference type="HOGENOM" id="CLU_098841_0_1_9"/>
<dbReference type="GO" id="GO:0022625">
    <property type="term" value="C:cytosolic large ribosomal subunit"/>
    <property type="evidence" value="ECO:0007669"/>
    <property type="project" value="TreeGrafter"/>
</dbReference>
<dbReference type="GO" id="GO:0008097">
    <property type="term" value="F:5S rRNA binding"/>
    <property type="evidence" value="ECO:0007669"/>
    <property type="project" value="TreeGrafter"/>
</dbReference>
<dbReference type="GO" id="GO:0003735">
    <property type="term" value="F:structural constituent of ribosome"/>
    <property type="evidence" value="ECO:0007669"/>
    <property type="project" value="InterPro"/>
</dbReference>
<dbReference type="GO" id="GO:0006412">
    <property type="term" value="P:translation"/>
    <property type="evidence" value="ECO:0007669"/>
    <property type="project" value="UniProtKB-UniRule"/>
</dbReference>
<dbReference type="CDD" id="cd00432">
    <property type="entry name" value="Ribosomal_L18_L5e"/>
    <property type="match status" value="1"/>
</dbReference>
<dbReference type="FunFam" id="3.30.420.100:FF:000001">
    <property type="entry name" value="50S ribosomal protein L18"/>
    <property type="match status" value="1"/>
</dbReference>
<dbReference type="Gene3D" id="3.30.420.100">
    <property type="match status" value="1"/>
</dbReference>
<dbReference type="HAMAP" id="MF_01337_B">
    <property type="entry name" value="Ribosomal_uL18_B"/>
    <property type="match status" value="1"/>
</dbReference>
<dbReference type="InterPro" id="IPR004389">
    <property type="entry name" value="Ribosomal_uL18_bac-type"/>
</dbReference>
<dbReference type="InterPro" id="IPR005484">
    <property type="entry name" value="Ribosomal_uL18_bac/euk"/>
</dbReference>
<dbReference type="NCBIfam" id="TIGR00060">
    <property type="entry name" value="L18_bact"/>
    <property type="match status" value="1"/>
</dbReference>
<dbReference type="PANTHER" id="PTHR12899">
    <property type="entry name" value="39S RIBOSOMAL PROTEIN L18, MITOCHONDRIAL"/>
    <property type="match status" value="1"/>
</dbReference>
<dbReference type="PANTHER" id="PTHR12899:SF3">
    <property type="entry name" value="LARGE RIBOSOMAL SUBUNIT PROTEIN UL18M"/>
    <property type="match status" value="1"/>
</dbReference>
<dbReference type="Pfam" id="PF00861">
    <property type="entry name" value="Ribosomal_L18p"/>
    <property type="match status" value="1"/>
</dbReference>
<dbReference type="SUPFAM" id="SSF53137">
    <property type="entry name" value="Translational machinery components"/>
    <property type="match status" value="1"/>
</dbReference>
<gene>
    <name evidence="1" type="primary">rplR</name>
    <name type="ordered locus">SpyM50060</name>
</gene>
<organism>
    <name type="scientific">Streptococcus pyogenes serotype M5 (strain Manfredo)</name>
    <dbReference type="NCBI Taxonomy" id="160491"/>
    <lineage>
        <taxon>Bacteria</taxon>
        <taxon>Bacillati</taxon>
        <taxon>Bacillota</taxon>
        <taxon>Bacilli</taxon>
        <taxon>Lactobacillales</taxon>
        <taxon>Streptococcaceae</taxon>
        <taxon>Streptococcus</taxon>
    </lineage>
</organism>
<keyword id="KW-0687">Ribonucleoprotein</keyword>
<keyword id="KW-0689">Ribosomal protein</keyword>
<keyword id="KW-0694">RNA-binding</keyword>
<keyword id="KW-0699">rRNA-binding</keyword>
<evidence type="ECO:0000255" key="1">
    <source>
        <dbReference type="HAMAP-Rule" id="MF_01337"/>
    </source>
</evidence>
<evidence type="ECO:0000256" key="2">
    <source>
        <dbReference type="SAM" id="MobiDB-lite"/>
    </source>
</evidence>
<evidence type="ECO:0000305" key="3"/>
<reference key="1">
    <citation type="journal article" date="2007" name="J. Bacteriol.">
        <title>Complete genome of acute rheumatic fever-associated serotype M5 Streptococcus pyogenes strain Manfredo.</title>
        <authorList>
            <person name="Holden M.T.G."/>
            <person name="Scott A."/>
            <person name="Cherevach I."/>
            <person name="Chillingworth T."/>
            <person name="Churcher C."/>
            <person name="Cronin A."/>
            <person name="Dowd L."/>
            <person name="Feltwell T."/>
            <person name="Hamlin N."/>
            <person name="Holroyd S."/>
            <person name="Jagels K."/>
            <person name="Moule S."/>
            <person name="Mungall K."/>
            <person name="Quail M.A."/>
            <person name="Price C."/>
            <person name="Rabbinowitsch E."/>
            <person name="Sharp S."/>
            <person name="Skelton J."/>
            <person name="Whitehead S."/>
            <person name="Barrell B.G."/>
            <person name="Kehoe M."/>
            <person name="Parkhill J."/>
        </authorList>
    </citation>
    <scope>NUCLEOTIDE SEQUENCE [LARGE SCALE GENOMIC DNA]</scope>
    <source>
        <strain>Manfredo</strain>
    </source>
</reference>
<feature type="chain" id="PRO_1000053121" description="Large ribosomal subunit protein uL18">
    <location>
        <begin position="1"/>
        <end position="118"/>
    </location>
</feature>
<feature type="region of interest" description="Disordered" evidence="2">
    <location>
        <begin position="1"/>
        <end position="25"/>
    </location>
</feature>
<feature type="compositionally biased region" description="Basic residues" evidence="2">
    <location>
        <begin position="10"/>
        <end position="20"/>
    </location>
</feature>
<comment type="function">
    <text evidence="1">This is one of the proteins that bind and probably mediate the attachment of the 5S RNA into the large ribosomal subunit, where it forms part of the central protuberance.</text>
</comment>
<comment type="subunit">
    <text evidence="1">Part of the 50S ribosomal subunit; part of the 5S rRNA/L5/L18/L25 subcomplex. Contacts the 5S and 23S rRNAs.</text>
</comment>
<comment type="similarity">
    <text evidence="1">Belongs to the universal ribosomal protein uL18 family.</text>
</comment>
<accession>A2RC30</accession>